<proteinExistence type="evidence at protein level"/>
<sequence>MAARDATSGSLSEESSALDLPSACDIRDYVLQGPSQEANSEAFSSLEFHSFPYSSDVDPDTSNLNIEQNNSWTAENFWLDPAVKGQSEKEEDDGLRKSLDRFYEMFGHPQPGSANSLSASVCKCLSQKITQLRGQESQKYALRSFQMARVIFNRDGCSVLQRHSRDTHFYPLEEGSTSLDDEKPNPGLSKDITHFLLQQNVMKDL</sequence>
<keyword id="KW-0025">Alternative splicing</keyword>
<keyword id="KW-0158">Chromosome</keyword>
<keyword id="KW-0227">DNA damage</keyword>
<keyword id="KW-0234">DNA repair</keyword>
<keyword id="KW-1267">Proteomics identification</keyword>
<keyword id="KW-1185">Reference proteome</keyword>
<accession>Q8IYI0</accession>
<accession>A8K9J3</accession>
<accession>Q5TGA9</accession>
<accession>Q96LU1</accession>
<name>SHLD1_HUMAN</name>
<comment type="function">
    <text evidence="1">Component of the shieldin complex, which plays an important role in repair of DNA double-stranded breaks (DSBs). During G1 and S phase of the cell cycle, the complex functions downstream of TP53BP1 to promote non-homologous end joining (NHEJ) and suppress DNA end resection. Mediates various NHEJ-dependent processes including immunoglobulin class-switch recombination, and fusion of unprotected telomeres.</text>
</comment>
<comment type="subunit">
    <text evidence="1 2">Component of the shieldin complex, consisting of SHLD1, SHLD2, SHLD3 and MAD2L2/REV7. Within the complex, SHLD2 forms a scaffold which interacts with a SHLD3-MAD2L2 subcomplex via its N-terminus, and with SHLD1 via its C-terminus (PubMed:29656893). Interacts with ASTE1 (PubMed:34354233).</text>
</comment>
<comment type="interaction">
    <interactant intactId="EBI-2560428">
        <id>Q8IYI0</id>
    </interactant>
    <interactant intactId="EBI-21535880">
        <id>Q92870-2</id>
        <label>APBB2</label>
    </interactant>
    <organismsDiffer>false</organismsDiffer>
    <experiments>3</experiments>
</comment>
<comment type="interaction">
    <interactant intactId="EBI-2560428">
        <id>Q8IYI0</id>
    </interactant>
    <interactant intactId="EBI-10976677">
        <id>G5E9A7</id>
        <label>DMWD</label>
    </interactant>
    <organismsDiffer>false</organismsDiffer>
    <experiments>3</experiments>
</comment>
<comment type="interaction">
    <interactant intactId="EBI-2560428">
        <id>Q8IYI0</id>
    </interactant>
    <interactant intactId="EBI-352682">
        <id>P04792</id>
        <label>HSPB1</label>
    </interactant>
    <organismsDiffer>false</organismsDiffer>
    <experiments>3</experiments>
</comment>
<comment type="interaction">
    <interactant intactId="EBI-2560428">
        <id>Q8IYI0</id>
    </interactant>
    <interactant intactId="EBI-466029">
        <id>P42858</id>
        <label>HTT</label>
    </interactant>
    <organismsDiffer>false</organismsDiffer>
    <experiments>3</experiments>
</comment>
<comment type="interaction">
    <interactant intactId="EBI-2560428">
        <id>Q8IYI0</id>
    </interactant>
    <interactant intactId="EBI-10975473">
        <id>O60333-2</id>
        <label>KIF1B</label>
    </interactant>
    <organismsDiffer>false</organismsDiffer>
    <experiments>3</experiments>
</comment>
<comment type="interaction">
    <interactant intactId="EBI-2560428">
        <id>Q8IYI0</id>
    </interactant>
    <interactant intactId="EBI-50433196">
        <id>A0A6Q8PF08</id>
        <label>PMP22</label>
    </interactant>
    <organismsDiffer>false</organismsDiffer>
    <experiments>3</experiments>
</comment>
<comment type="interaction">
    <interactant intactId="EBI-2560428">
        <id>Q8IYI0</id>
    </interactant>
    <interactant intactId="EBI-347462">
        <id>P47897</id>
        <label>QARS1</label>
    </interactant>
    <organismsDiffer>false</organismsDiffer>
    <experiments>3</experiments>
</comment>
<comment type="interaction">
    <interactant intactId="EBI-2560428">
        <id>Q8IYI0</id>
    </interactant>
    <interactant intactId="EBI-2560414">
        <id>Q86V20</id>
        <label>SHLD2</label>
    </interactant>
    <organismsDiffer>false</organismsDiffer>
    <experiments>2</experiments>
</comment>
<comment type="interaction">
    <interactant intactId="EBI-2560428">
        <id>Q8IYI0</id>
    </interactant>
    <interactant intactId="EBI-5235340">
        <id>Q7Z699</id>
        <label>SPRED1</label>
    </interactant>
    <organismsDiffer>false</organismsDiffer>
    <experiments>3</experiments>
</comment>
<comment type="interaction">
    <interactant intactId="EBI-2560428">
        <id>Q8IYI0</id>
    </interactant>
    <interactant intactId="EBI-720609">
        <id>O76024</id>
        <label>WFS1</label>
    </interactant>
    <organismsDiffer>false</organismsDiffer>
    <experiments>3</experiments>
</comment>
<comment type="subcellular location">
    <subcellularLocation>
        <location evidence="1">Chromosome</location>
    </subcellularLocation>
</comment>
<comment type="alternative products">
    <event type="alternative splicing"/>
    <isoform>
        <id>Q8IYI0-1</id>
        <name>1</name>
        <sequence type="displayed"/>
    </isoform>
    <isoform>
        <id>Q8IYI0-2</id>
        <name>2</name>
        <sequence type="described" ref="VSP_025125"/>
    </isoform>
</comment>
<comment type="miscellaneous">
    <text evidence="1">In BRCA1-deficient cells, function of the shieldin complex is necessary for sensitivity to the PARP inhibitor olaparib.</text>
</comment>
<feature type="chain" id="PRO_0000286612" description="Shieldin complex subunit 1">
    <location>
        <begin position="1"/>
        <end position="205"/>
    </location>
</feature>
<feature type="splice variant" id="VSP_025125" description="In isoform 2." evidence="3">
    <location>
        <begin position="142"/>
        <end position="195"/>
    </location>
</feature>
<feature type="sequence variant" id="VAR_032144" description="In dbSNP:rs237422.">
    <original>A</original>
    <variation>V</variation>
    <location>
        <position position="23"/>
    </location>
</feature>
<dbReference type="EMBL" id="AK057796">
    <property type="protein sequence ID" value="BAB71578.1"/>
    <property type="molecule type" value="mRNA"/>
</dbReference>
<dbReference type="EMBL" id="AK292708">
    <property type="protein sequence ID" value="BAF85397.1"/>
    <property type="molecule type" value="mRNA"/>
</dbReference>
<dbReference type="EMBL" id="AL035249">
    <property type="status" value="NOT_ANNOTATED_CDS"/>
    <property type="molecule type" value="Genomic_DNA"/>
</dbReference>
<dbReference type="EMBL" id="AL390028">
    <property type="status" value="NOT_ANNOTATED_CDS"/>
    <property type="molecule type" value="Genomic_DNA"/>
</dbReference>
<dbReference type="EMBL" id="CH471133">
    <property type="protein sequence ID" value="EAX10412.1"/>
    <property type="molecule type" value="Genomic_DNA"/>
</dbReference>
<dbReference type="EMBL" id="BC035800">
    <property type="protein sequence ID" value="AAH35800.1"/>
    <property type="molecule type" value="mRNA"/>
</dbReference>
<dbReference type="CCDS" id="CCDS13091.1">
    <molecule id="Q8IYI0-1"/>
</dbReference>
<dbReference type="RefSeq" id="NP_001290406.1">
    <molecule id="Q8IYI0-1"/>
    <property type="nucleotide sequence ID" value="NM_001303477.2"/>
</dbReference>
<dbReference type="RefSeq" id="NP_001290407.1">
    <property type="nucleotide sequence ID" value="NM_001303478.1"/>
</dbReference>
<dbReference type="RefSeq" id="NP_001290408.1">
    <property type="nucleotide sequence ID" value="NM_001303479.1"/>
</dbReference>
<dbReference type="RefSeq" id="NP_689717.2">
    <molecule id="Q8IYI0-1"/>
    <property type="nucleotide sequence ID" value="NM_152504.3"/>
</dbReference>
<dbReference type="RefSeq" id="XP_016883173.1">
    <property type="nucleotide sequence ID" value="XM_017027684.1"/>
</dbReference>
<dbReference type="BioGRID" id="127244">
    <property type="interactions" value="12"/>
</dbReference>
<dbReference type="ComplexPortal" id="CPX-3481">
    <property type="entry name" value="Shieldin complex"/>
</dbReference>
<dbReference type="CORUM" id="Q8IYI0"/>
<dbReference type="FunCoup" id="Q8IYI0">
    <property type="interactions" value="160"/>
</dbReference>
<dbReference type="IntAct" id="Q8IYI0">
    <property type="interactions" value="15"/>
</dbReference>
<dbReference type="MINT" id="Q8IYI0"/>
<dbReference type="STRING" id="9606.ENSP00000305875"/>
<dbReference type="iPTMnet" id="Q8IYI0"/>
<dbReference type="PhosphoSitePlus" id="Q8IYI0"/>
<dbReference type="BioMuta" id="C20orf196"/>
<dbReference type="jPOST" id="Q8IYI0"/>
<dbReference type="MassIVE" id="Q8IYI0"/>
<dbReference type="PaxDb" id="9606-ENSP00000305875"/>
<dbReference type="PeptideAtlas" id="Q8IYI0"/>
<dbReference type="ProteomicsDB" id="71178">
    <molecule id="Q8IYI0-1"/>
</dbReference>
<dbReference type="ProteomicsDB" id="71179">
    <molecule id="Q8IYI0-2"/>
</dbReference>
<dbReference type="Antibodypedia" id="49253">
    <property type="antibodies" value="63 antibodies from 10 providers"/>
</dbReference>
<dbReference type="DNASU" id="149840"/>
<dbReference type="Ensembl" id="ENST00000303142.11">
    <molecule id="Q8IYI0-1"/>
    <property type="protein sequence ID" value="ENSP00000305875.6"/>
    <property type="gene ID" value="ENSG00000171984.15"/>
</dbReference>
<dbReference type="GeneID" id="149840"/>
<dbReference type="KEGG" id="hsa:149840"/>
<dbReference type="MANE-Select" id="ENST00000303142.11">
    <property type="protein sequence ID" value="ENSP00000305875.6"/>
    <property type="RefSeq nucleotide sequence ID" value="NM_152504.4"/>
    <property type="RefSeq protein sequence ID" value="NP_689717.2"/>
</dbReference>
<dbReference type="UCSC" id="uc002wmf.4">
    <molecule id="Q8IYI0-1"/>
    <property type="organism name" value="human"/>
</dbReference>
<dbReference type="AGR" id="HGNC:26318"/>
<dbReference type="CTD" id="149840"/>
<dbReference type="GeneCards" id="SHLD1"/>
<dbReference type="HGNC" id="HGNC:26318">
    <property type="gene designation" value="SHLD1"/>
</dbReference>
<dbReference type="HPA" id="ENSG00000171984">
    <property type="expression patterns" value="Low tissue specificity"/>
</dbReference>
<dbReference type="MIM" id="618028">
    <property type="type" value="gene"/>
</dbReference>
<dbReference type="neXtProt" id="NX_Q8IYI0"/>
<dbReference type="OpenTargets" id="ENSG00000171984"/>
<dbReference type="PharmGKB" id="PA145149476"/>
<dbReference type="VEuPathDB" id="HostDB:ENSG00000171984"/>
<dbReference type="eggNOG" id="ENOG502SUXK">
    <property type="taxonomic scope" value="Eukaryota"/>
</dbReference>
<dbReference type="GeneTree" id="ENSGT00390000014969"/>
<dbReference type="HOGENOM" id="CLU_090358_0_0_1"/>
<dbReference type="InParanoid" id="Q8IYI0"/>
<dbReference type="OMA" id="NHPTTAC"/>
<dbReference type="OrthoDB" id="9446682at2759"/>
<dbReference type="PAN-GO" id="Q8IYI0">
    <property type="GO annotations" value="4 GO annotations based on evolutionary models"/>
</dbReference>
<dbReference type="PhylomeDB" id="Q8IYI0"/>
<dbReference type="TreeFam" id="TF336046"/>
<dbReference type="PathwayCommons" id="Q8IYI0"/>
<dbReference type="SignaLink" id="Q8IYI0"/>
<dbReference type="BioGRID-ORCS" id="149840">
    <property type="hits" value="85 hits in 1129 CRISPR screens"/>
</dbReference>
<dbReference type="ChiTaRS" id="C20orf196">
    <property type="organism name" value="human"/>
</dbReference>
<dbReference type="GenomeRNAi" id="149840"/>
<dbReference type="Pharos" id="Q8IYI0">
    <property type="development level" value="Tbio"/>
</dbReference>
<dbReference type="PRO" id="PR:Q8IYI0"/>
<dbReference type="Proteomes" id="UP000005640">
    <property type="component" value="Chromosome 20"/>
</dbReference>
<dbReference type="RNAct" id="Q8IYI0">
    <property type="molecule type" value="protein"/>
</dbReference>
<dbReference type="Bgee" id="ENSG00000171984">
    <property type="expression patterns" value="Expressed in primordial germ cell in gonad and 123 other cell types or tissues"/>
</dbReference>
<dbReference type="ExpressionAtlas" id="Q8IYI0">
    <property type="expression patterns" value="baseline and differential"/>
</dbReference>
<dbReference type="GO" id="GO:0000785">
    <property type="term" value="C:chromatin"/>
    <property type="evidence" value="ECO:0000303"/>
    <property type="project" value="ComplexPortal"/>
</dbReference>
<dbReference type="GO" id="GO:0005694">
    <property type="term" value="C:chromosome"/>
    <property type="evidence" value="ECO:0000314"/>
    <property type="project" value="UniProtKB"/>
</dbReference>
<dbReference type="GO" id="GO:0035861">
    <property type="term" value="C:site of double-strand break"/>
    <property type="evidence" value="ECO:0000314"/>
    <property type="project" value="UniProtKB"/>
</dbReference>
<dbReference type="GO" id="GO:0006281">
    <property type="term" value="P:DNA repair"/>
    <property type="evidence" value="ECO:0007669"/>
    <property type="project" value="UniProtKB-KW"/>
</dbReference>
<dbReference type="GO" id="GO:2000042">
    <property type="term" value="P:negative regulation of double-strand break repair via homologous recombination"/>
    <property type="evidence" value="ECO:0000314"/>
    <property type="project" value="UniProtKB"/>
</dbReference>
<dbReference type="GO" id="GO:2001034">
    <property type="term" value="P:positive regulation of double-strand break repair via nonhomologous end joining"/>
    <property type="evidence" value="ECO:0000314"/>
    <property type="project" value="UniProtKB"/>
</dbReference>
<dbReference type="GO" id="GO:0045830">
    <property type="term" value="P:positive regulation of isotype switching"/>
    <property type="evidence" value="ECO:0000314"/>
    <property type="project" value="UniProtKB"/>
</dbReference>
<dbReference type="GO" id="GO:0002208">
    <property type="term" value="P:somatic diversification of immunoglobulins involved in immune response"/>
    <property type="evidence" value="ECO:0000303"/>
    <property type="project" value="ComplexPortal"/>
</dbReference>
<dbReference type="GO" id="GO:0043247">
    <property type="term" value="P:telomere maintenance in response to DNA damage"/>
    <property type="evidence" value="ECO:0000303"/>
    <property type="project" value="ComplexPortal"/>
</dbReference>
<dbReference type="InterPro" id="IPR027821">
    <property type="entry name" value="SHLD1"/>
</dbReference>
<dbReference type="InterPro" id="IPR053898">
    <property type="entry name" value="SHLD1_C"/>
</dbReference>
<dbReference type="PANTHER" id="PTHR36863">
    <property type="entry name" value="SHIELDIN COMPLEX SUBUNIT 1"/>
    <property type="match status" value="1"/>
</dbReference>
<dbReference type="PANTHER" id="PTHR36863:SF1">
    <property type="entry name" value="SHIELDIN COMPLEX SUBUNIT 1"/>
    <property type="match status" value="1"/>
</dbReference>
<dbReference type="Pfam" id="PF15021">
    <property type="entry name" value="SHLD1_C"/>
    <property type="match status" value="1"/>
</dbReference>
<reference key="1">
    <citation type="journal article" date="2004" name="Nat. Genet.">
        <title>Complete sequencing and characterization of 21,243 full-length human cDNAs.</title>
        <authorList>
            <person name="Ota T."/>
            <person name="Suzuki Y."/>
            <person name="Nishikawa T."/>
            <person name="Otsuki T."/>
            <person name="Sugiyama T."/>
            <person name="Irie R."/>
            <person name="Wakamatsu A."/>
            <person name="Hayashi K."/>
            <person name="Sato H."/>
            <person name="Nagai K."/>
            <person name="Kimura K."/>
            <person name="Makita H."/>
            <person name="Sekine M."/>
            <person name="Obayashi M."/>
            <person name="Nishi T."/>
            <person name="Shibahara T."/>
            <person name="Tanaka T."/>
            <person name="Ishii S."/>
            <person name="Yamamoto J."/>
            <person name="Saito K."/>
            <person name="Kawai Y."/>
            <person name="Isono Y."/>
            <person name="Nakamura Y."/>
            <person name="Nagahari K."/>
            <person name="Murakami K."/>
            <person name="Yasuda T."/>
            <person name="Iwayanagi T."/>
            <person name="Wagatsuma M."/>
            <person name="Shiratori A."/>
            <person name="Sudo H."/>
            <person name="Hosoiri T."/>
            <person name="Kaku Y."/>
            <person name="Kodaira H."/>
            <person name="Kondo H."/>
            <person name="Sugawara M."/>
            <person name="Takahashi M."/>
            <person name="Kanda K."/>
            <person name="Yokoi T."/>
            <person name="Furuya T."/>
            <person name="Kikkawa E."/>
            <person name="Omura Y."/>
            <person name="Abe K."/>
            <person name="Kamihara K."/>
            <person name="Katsuta N."/>
            <person name="Sato K."/>
            <person name="Tanikawa M."/>
            <person name="Yamazaki M."/>
            <person name="Ninomiya K."/>
            <person name="Ishibashi T."/>
            <person name="Yamashita H."/>
            <person name="Murakawa K."/>
            <person name="Fujimori K."/>
            <person name="Tanai H."/>
            <person name="Kimata M."/>
            <person name="Watanabe M."/>
            <person name="Hiraoka S."/>
            <person name="Chiba Y."/>
            <person name="Ishida S."/>
            <person name="Ono Y."/>
            <person name="Takiguchi S."/>
            <person name="Watanabe S."/>
            <person name="Yosida M."/>
            <person name="Hotuta T."/>
            <person name="Kusano J."/>
            <person name="Kanehori K."/>
            <person name="Takahashi-Fujii A."/>
            <person name="Hara H."/>
            <person name="Tanase T.-O."/>
            <person name="Nomura Y."/>
            <person name="Togiya S."/>
            <person name="Komai F."/>
            <person name="Hara R."/>
            <person name="Takeuchi K."/>
            <person name="Arita M."/>
            <person name="Imose N."/>
            <person name="Musashino K."/>
            <person name="Yuuki H."/>
            <person name="Oshima A."/>
            <person name="Sasaki N."/>
            <person name="Aotsuka S."/>
            <person name="Yoshikawa Y."/>
            <person name="Matsunawa H."/>
            <person name="Ichihara T."/>
            <person name="Shiohata N."/>
            <person name="Sano S."/>
            <person name="Moriya S."/>
            <person name="Momiyama H."/>
            <person name="Satoh N."/>
            <person name="Takami S."/>
            <person name="Terashima Y."/>
            <person name="Suzuki O."/>
            <person name="Nakagawa S."/>
            <person name="Senoh A."/>
            <person name="Mizoguchi H."/>
            <person name="Goto Y."/>
            <person name="Shimizu F."/>
            <person name="Wakebe H."/>
            <person name="Hishigaki H."/>
            <person name="Watanabe T."/>
            <person name="Sugiyama A."/>
            <person name="Takemoto M."/>
            <person name="Kawakami B."/>
            <person name="Yamazaki M."/>
            <person name="Watanabe K."/>
            <person name="Kumagai A."/>
            <person name="Itakura S."/>
            <person name="Fukuzumi Y."/>
            <person name="Fujimori Y."/>
            <person name="Komiyama M."/>
            <person name="Tashiro H."/>
            <person name="Tanigami A."/>
            <person name="Fujiwara T."/>
            <person name="Ono T."/>
            <person name="Yamada K."/>
            <person name="Fujii Y."/>
            <person name="Ozaki K."/>
            <person name="Hirao M."/>
            <person name="Ohmori Y."/>
            <person name="Kawabata A."/>
            <person name="Hikiji T."/>
            <person name="Kobatake N."/>
            <person name="Inagaki H."/>
            <person name="Ikema Y."/>
            <person name="Okamoto S."/>
            <person name="Okitani R."/>
            <person name="Kawakami T."/>
            <person name="Noguchi S."/>
            <person name="Itoh T."/>
            <person name="Shigeta K."/>
            <person name="Senba T."/>
            <person name="Matsumura K."/>
            <person name="Nakajima Y."/>
            <person name="Mizuno T."/>
            <person name="Morinaga M."/>
            <person name="Sasaki M."/>
            <person name="Togashi T."/>
            <person name="Oyama M."/>
            <person name="Hata H."/>
            <person name="Watanabe M."/>
            <person name="Komatsu T."/>
            <person name="Mizushima-Sugano J."/>
            <person name="Satoh T."/>
            <person name="Shirai Y."/>
            <person name="Takahashi Y."/>
            <person name="Nakagawa K."/>
            <person name="Okumura K."/>
            <person name="Nagase T."/>
            <person name="Nomura N."/>
            <person name="Kikuchi H."/>
            <person name="Masuho Y."/>
            <person name="Yamashita R."/>
            <person name="Nakai K."/>
            <person name="Yada T."/>
            <person name="Nakamura Y."/>
            <person name="Ohara O."/>
            <person name="Isogai T."/>
            <person name="Sugano S."/>
        </authorList>
    </citation>
    <scope>NUCLEOTIDE SEQUENCE [LARGE SCALE MRNA] (ISOFORMS 1 AND 2)</scope>
    <source>
        <tissue>Cerebellum</tissue>
        <tissue>Thymus</tissue>
    </source>
</reference>
<reference key="2">
    <citation type="journal article" date="2001" name="Nature">
        <title>The DNA sequence and comparative analysis of human chromosome 20.</title>
        <authorList>
            <person name="Deloukas P."/>
            <person name="Matthews L.H."/>
            <person name="Ashurst J.L."/>
            <person name="Burton J."/>
            <person name="Gilbert J.G.R."/>
            <person name="Jones M."/>
            <person name="Stavrides G."/>
            <person name="Almeida J.P."/>
            <person name="Babbage A.K."/>
            <person name="Bagguley C.L."/>
            <person name="Bailey J."/>
            <person name="Barlow K.F."/>
            <person name="Bates K.N."/>
            <person name="Beard L.M."/>
            <person name="Beare D.M."/>
            <person name="Beasley O.P."/>
            <person name="Bird C.P."/>
            <person name="Blakey S.E."/>
            <person name="Bridgeman A.M."/>
            <person name="Brown A.J."/>
            <person name="Buck D."/>
            <person name="Burrill W.D."/>
            <person name="Butler A.P."/>
            <person name="Carder C."/>
            <person name="Carter N.P."/>
            <person name="Chapman J.C."/>
            <person name="Clamp M."/>
            <person name="Clark G."/>
            <person name="Clark L.N."/>
            <person name="Clark S.Y."/>
            <person name="Clee C.M."/>
            <person name="Clegg S."/>
            <person name="Cobley V.E."/>
            <person name="Collier R.E."/>
            <person name="Connor R.E."/>
            <person name="Corby N.R."/>
            <person name="Coulson A."/>
            <person name="Coville G.J."/>
            <person name="Deadman R."/>
            <person name="Dhami P.D."/>
            <person name="Dunn M."/>
            <person name="Ellington A.G."/>
            <person name="Frankland J.A."/>
            <person name="Fraser A."/>
            <person name="French L."/>
            <person name="Garner P."/>
            <person name="Grafham D.V."/>
            <person name="Griffiths C."/>
            <person name="Griffiths M.N.D."/>
            <person name="Gwilliam R."/>
            <person name="Hall R.E."/>
            <person name="Hammond S."/>
            <person name="Harley J.L."/>
            <person name="Heath P.D."/>
            <person name="Ho S."/>
            <person name="Holden J.L."/>
            <person name="Howden P.J."/>
            <person name="Huckle E."/>
            <person name="Hunt A.R."/>
            <person name="Hunt S.E."/>
            <person name="Jekosch K."/>
            <person name="Johnson C.M."/>
            <person name="Johnson D."/>
            <person name="Kay M.P."/>
            <person name="Kimberley A.M."/>
            <person name="King A."/>
            <person name="Knights A."/>
            <person name="Laird G.K."/>
            <person name="Lawlor S."/>
            <person name="Lehvaeslaiho M.H."/>
            <person name="Leversha M.A."/>
            <person name="Lloyd C."/>
            <person name="Lloyd D.M."/>
            <person name="Lovell J.D."/>
            <person name="Marsh V.L."/>
            <person name="Martin S.L."/>
            <person name="McConnachie L.J."/>
            <person name="McLay K."/>
            <person name="McMurray A.A."/>
            <person name="Milne S.A."/>
            <person name="Mistry D."/>
            <person name="Moore M.J.F."/>
            <person name="Mullikin J.C."/>
            <person name="Nickerson T."/>
            <person name="Oliver K."/>
            <person name="Parker A."/>
            <person name="Patel R."/>
            <person name="Pearce T.A.V."/>
            <person name="Peck A.I."/>
            <person name="Phillimore B.J.C.T."/>
            <person name="Prathalingam S.R."/>
            <person name="Plumb R.W."/>
            <person name="Ramsay H."/>
            <person name="Rice C.M."/>
            <person name="Ross M.T."/>
            <person name="Scott C.E."/>
            <person name="Sehra H.K."/>
            <person name="Shownkeen R."/>
            <person name="Sims S."/>
            <person name="Skuce C.D."/>
            <person name="Smith M.L."/>
            <person name="Soderlund C."/>
            <person name="Steward C.A."/>
            <person name="Sulston J.E."/>
            <person name="Swann R.M."/>
            <person name="Sycamore N."/>
            <person name="Taylor R."/>
            <person name="Tee L."/>
            <person name="Thomas D.W."/>
            <person name="Thorpe A."/>
            <person name="Tracey A."/>
            <person name="Tromans A.C."/>
            <person name="Vaudin M."/>
            <person name="Wall M."/>
            <person name="Wallis J.M."/>
            <person name="Whitehead S.L."/>
            <person name="Whittaker P."/>
            <person name="Willey D.L."/>
            <person name="Williams L."/>
            <person name="Williams S.A."/>
            <person name="Wilming L."/>
            <person name="Wray P.W."/>
            <person name="Hubbard T."/>
            <person name="Durbin R.M."/>
            <person name="Bentley D.R."/>
            <person name="Beck S."/>
            <person name="Rogers J."/>
        </authorList>
    </citation>
    <scope>NUCLEOTIDE SEQUENCE [LARGE SCALE GENOMIC DNA]</scope>
</reference>
<reference key="3">
    <citation type="submission" date="2005-09" db="EMBL/GenBank/DDBJ databases">
        <authorList>
            <person name="Mural R.J."/>
            <person name="Istrail S."/>
            <person name="Sutton G.G."/>
            <person name="Florea L."/>
            <person name="Halpern A.L."/>
            <person name="Mobarry C.M."/>
            <person name="Lippert R."/>
            <person name="Walenz B."/>
            <person name="Shatkay H."/>
            <person name="Dew I."/>
            <person name="Miller J.R."/>
            <person name="Flanigan M.J."/>
            <person name="Edwards N.J."/>
            <person name="Bolanos R."/>
            <person name="Fasulo D."/>
            <person name="Halldorsson B.V."/>
            <person name="Hannenhalli S."/>
            <person name="Turner R."/>
            <person name="Yooseph S."/>
            <person name="Lu F."/>
            <person name="Nusskern D.R."/>
            <person name="Shue B.C."/>
            <person name="Zheng X.H."/>
            <person name="Zhong F."/>
            <person name="Delcher A.L."/>
            <person name="Huson D.H."/>
            <person name="Kravitz S.A."/>
            <person name="Mouchard L."/>
            <person name="Reinert K."/>
            <person name="Remington K.A."/>
            <person name="Clark A.G."/>
            <person name="Waterman M.S."/>
            <person name="Eichler E.E."/>
            <person name="Adams M.D."/>
            <person name="Hunkapiller M.W."/>
            <person name="Myers E.W."/>
            <person name="Venter J.C."/>
        </authorList>
    </citation>
    <scope>NUCLEOTIDE SEQUENCE [LARGE SCALE GENOMIC DNA]</scope>
</reference>
<reference key="4">
    <citation type="journal article" date="2004" name="Genome Res.">
        <title>The status, quality, and expansion of the NIH full-length cDNA project: the Mammalian Gene Collection (MGC).</title>
        <authorList>
            <consortium name="The MGC Project Team"/>
        </authorList>
    </citation>
    <scope>NUCLEOTIDE SEQUENCE [LARGE SCALE MRNA] (ISOFORM 1)</scope>
    <source>
        <tissue>Brain</tissue>
    </source>
</reference>
<reference key="5">
    <citation type="journal article" date="2018" name="Cell">
        <title>DNA repair network analysis reveals shieldin as a key regulator of NHEJ and PARP inhibitor sensitivity.</title>
        <authorList>
            <person name="Gupta R."/>
            <person name="Somyajit K."/>
            <person name="Narita T."/>
            <person name="Maskey E."/>
            <person name="Stanlie A."/>
            <person name="Kremer M."/>
            <person name="Typas D."/>
            <person name="Lammers M."/>
            <person name="Mailand N."/>
            <person name="Nussenzweig A."/>
            <person name="Lukas J."/>
            <person name="Choudhary C."/>
        </authorList>
    </citation>
    <scope>FUNCTION</scope>
    <scope>IDENTIFICATION IN THE SHIELDIN COMPLEX</scope>
    <scope>INTERACTION WITH SHLD2</scope>
    <scope>SUBCELLULAR LOCATION</scope>
    <scope>IDENTIFICATION BY MASS SPECTROMETRY</scope>
</reference>
<reference key="6">
    <citation type="journal article" date="2021" name="Nat. Cell Biol.">
        <title>ASTE1 promotes shieldin-complex-mediated DNA repair by attenuating end resection.</title>
        <authorList>
            <person name="Zhao F."/>
            <person name="Kim W."/>
            <person name="Gao H."/>
            <person name="Liu C."/>
            <person name="Zhang Y."/>
            <person name="Chen Y."/>
            <person name="Deng M."/>
            <person name="Zhou Q."/>
            <person name="Huang J."/>
            <person name="Hu Q."/>
            <person name="Chen S.H."/>
            <person name="Nowsheen S."/>
            <person name="Kloeber J.A."/>
            <person name="Qin B."/>
            <person name="Yin P."/>
            <person name="Tu X."/>
            <person name="Guo G."/>
            <person name="Qin S."/>
            <person name="Zhang C."/>
            <person name="Gao M."/>
            <person name="Luo K."/>
            <person name="Liu Y."/>
            <person name="Lou Z."/>
            <person name="Yuan J."/>
        </authorList>
    </citation>
    <scope>INTERACTION WITH ASTE1</scope>
</reference>
<gene>
    <name evidence="5" type="primary">SHLD1</name>
    <name evidence="5" type="synonym">C20orf196</name>
    <name evidence="4" type="synonym">RINN3</name>
</gene>
<evidence type="ECO:0000269" key="1">
    <source>
    </source>
</evidence>
<evidence type="ECO:0000269" key="2">
    <source>
    </source>
</evidence>
<evidence type="ECO:0000303" key="3">
    <source>
    </source>
</evidence>
<evidence type="ECO:0000303" key="4">
    <source>
    </source>
</evidence>
<evidence type="ECO:0000312" key="5">
    <source>
        <dbReference type="HGNC" id="HGNC:26318"/>
    </source>
</evidence>
<protein>
    <recommendedName>
        <fullName evidence="5">Shieldin complex subunit 1</fullName>
    </recommendedName>
    <alternativeName>
        <fullName evidence="4">RINN1-REV7-interacting novel NHEJ regulator 3</fullName>
    </alternativeName>
    <alternativeName>
        <fullName>Shield complex subunit 1</fullName>
    </alternativeName>
</protein>
<organism>
    <name type="scientific">Homo sapiens</name>
    <name type="common">Human</name>
    <dbReference type="NCBI Taxonomy" id="9606"/>
    <lineage>
        <taxon>Eukaryota</taxon>
        <taxon>Metazoa</taxon>
        <taxon>Chordata</taxon>
        <taxon>Craniata</taxon>
        <taxon>Vertebrata</taxon>
        <taxon>Euteleostomi</taxon>
        <taxon>Mammalia</taxon>
        <taxon>Eutheria</taxon>
        <taxon>Euarchontoglires</taxon>
        <taxon>Primates</taxon>
        <taxon>Haplorrhini</taxon>
        <taxon>Catarrhini</taxon>
        <taxon>Hominidae</taxon>
        <taxon>Homo</taxon>
    </lineage>
</organism>